<comment type="function">
    <text evidence="1">PPIases accelerate the folding of proteins. It catalyzes the cis-trans isomerization of proline imidic peptide bonds in oligopeptides (By similarity).</text>
</comment>
<comment type="catalytic activity">
    <reaction>
        <text>[protein]-peptidylproline (omega=180) = [protein]-peptidylproline (omega=0)</text>
        <dbReference type="Rhea" id="RHEA:16237"/>
        <dbReference type="Rhea" id="RHEA-COMP:10747"/>
        <dbReference type="Rhea" id="RHEA-COMP:10748"/>
        <dbReference type="ChEBI" id="CHEBI:83833"/>
        <dbReference type="ChEBI" id="CHEBI:83834"/>
        <dbReference type="EC" id="5.2.1.8"/>
    </reaction>
</comment>
<comment type="subcellular location">
    <subcellularLocation>
        <location evidence="2">Cytoplasm</location>
    </subcellularLocation>
</comment>
<comment type="tissue specificity">
    <text evidence="4">Highly expressed in brain, ovary and mammary gland. Moderately expressed in lung, salivary gland, kidney, skin, adipose tissue, intestine and spleen. Weakly expressed in skeletal muscle, liver and stomach. Expressed in pleiomorphic and undifferentiated liposarcomas, osteosarcomas and breast carcinomas.</text>
</comment>
<comment type="miscellaneous">
    <text evidence="7">It is one of six related genes or pseudogenes found in a cluster, thought to result from gene duplication, on chromosome 1.</text>
</comment>
<comment type="similarity">
    <text evidence="7">Belongs to the cyclophilin-type PPIase family. PPIase A subfamily.</text>
</comment>
<proteinExistence type="evidence at protein level"/>
<reference key="1">
    <citation type="submission" date="2002-05" db="EMBL/GenBank/DDBJ databases">
        <title>Cyclophilin homologue overexpressed in liver cancer.</title>
        <authorList>
            <person name="Tanaka S."/>
        </authorList>
    </citation>
    <scope>NUCLEOTIDE SEQUENCE [MRNA]</scope>
</reference>
<reference key="2">
    <citation type="journal article" date="2006" name="Nature">
        <title>The DNA sequence and biological annotation of human chromosome 1.</title>
        <authorList>
            <person name="Gregory S.G."/>
            <person name="Barlow K.F."/>
            <person name="McLay K.E."/>
            <person name="Kaul R."/>
            <person name="Swarbreck D."/>
            <person name="Dunham A."/>
            <person name="Scott C.E."/>
            <person name="Howe K.L."/>
            <person name="Woodfine K."/>
            <person name="Spencer C.C.A."/>
            <person name="Jones M.C."/>
            <person name="Gillson C."/>
            <person name="Searle S."/>
            <person name="Zhou Y."/>
            <person name="Kokocinski F."/>
            <person name="McDonald L."/>
            <person name="Evans R."/>
            <person name="Phillips K."/>
            <person name="Atkinson A."/>
            <person name="Cooper R."/>
            <person name="Jones C."/>
            <person name="Hall R.E."/>
            <person name="Andrews T.D."/>
            <person name="Lloyd C."/>
            <person name="Ainscough R."/>
            <person name="Almeida J.P."/>
            <person name="Ambrose K.D."/>
            <person name="Anderson F."/>
            <person name="Andrew R.W."/>
            <person name="Ashwell R.I.S."/>
            <person name="Aubin K."/>
            <person name="Babbage A.K."/>
            <person name="Bagguley C.L."/>
            <person name="Bailey J."/>
            <person name="Beasley H."/>
            <person name="Bethel G."/>
            <person name="Bird C.P."/>
            <person name="Bray-Allen S."/>
            <person name="Brown J.Y."/>
            <person name="Brown A.J."/>
            <person name="Buckley D."/>
            <person name="Burton J."/>
            <person name="Bye J."/>
            <person name="Carder C."/>
            <person name="Chapman J.C."/>
            <person name="Clark S.Y."/>
            <person name="Clarke G."/>
            <person name="Clee C."/>
            <person name="Cobley V."/>
            <person name="Collier R.E."/>
            <person name="Corby N."/>
            <person name="Coville G.J."/>
            <person name="Davies J."/>
            <person name="Deadman R."/>
            <person name="Dunn M."/>
            <person name="Earthrowl M."/>
            <person name="Ellington A.G."/>
            <person name="Errington H."/>
            <person name="Frankish A."/>
            <person name="Frankland J."/>
            <person name="French L."/>
            <person name="Garner P."/>
            <person name="Garnett J."/>
            <person name="Gay L."/>
            <person name="Ghori M.R.J."/>
            <person name="Gibson R."/>
            <person name="Gilby L.M."/>
            <person name="Gillett W."/>
            <person name="Glithero R.J."/>
            <person name="Grafham D.V."/>
            <person name="Griffiths C."/>
            <person name="Griffiths-Jones S."/>
            <person name="Grocock R."/>
            <person name="Hammond S."/>
            <person name="Harrison E.S.I."/>
            <person name="Hart E."/>
            <person name="Haugen E."/>
            <person name="Heath P.D."/>
            <person name="Holmes S."/>
            <person name="Holt K."/>
            <person name="Howden P.J."/>
            <person name="Hunt A.R."/>
            <person name="Hunt S.E."/>
            <person name="Hunter G."/>
            <person name="Isherwood J."/>
            <person name="James R."/>
            <person name="Johnson C."/>
            <person name="Johnson D."/>
            <person name="Joy A."/>
            <person name="Kay M."/>
            <person name="Kershaw J.K."/>
            <person name="Kibukawa M."/>
            <person name="Kimberley A.M."/>
            <person name="King A."/>
            <person name="Knights A.J."/>
            <person name="Lad H."/>
            <person name="Laird G."/>
            <person name="Lawlor S."/>
            <person name="Leongamornlert D.A."/>
            <person name="Lloyd D.M."/>
            <person name="Loveland J."/>
            <person name="Lovell J."/>
            <person name="Lush M.J."/>
            <person name="Lyne R."/>
            <person name="Martin S."/>
            <person name="Mashreghi-Mohammadi M."/>
            <person name="Matthews L."/>
            <person name="Matthews N.S.W."/>
            <person name="McLaren S."/>
            <person name="Milne S."/>
            <person name="Mistry S."/>
            <person name="Moore M.J.F."/>
            <person name="Nickerson T."/>
            <person name="O'Dell C.N."/>
            <person name="Oliver K."/>
            <person name="Palmeiri A."/>
            <person name="Palmer S.A."/>
            <person name="Parker A."/>
            <person name="Patel D."/>
            <person name="Pearce A.V."/>
            <person name="Peck A.I."/>
            <person name="Pelan S."/>
            <person name="Phelps K."/>
            <person name="Phillimore B.J."/>
            <person name="Plumb R."/>
            <person name="Rajan J."/>
            <person name="Raymond C."/>
            <person name="Rouse G."/>
            <person name="Saenphimmachak C."/>
            <person name="Sehra H.K."/>
            <person name="Sheridan E."/>
            <person name="Shownkeen R."/>
            <person name="Sims S."/>
            <person name="Skuce C.D."/>
            <person name="Smith M."/>
            <person name="Steward C."/>
            <person name="Subramanian S."/>
            <person name="Sycamore N."/>
            <person name="Tracey A."/>
            <person name="Tromans A."/>
            <person name="Van Helmond Z."/>
            <person name="Wall M."/>
            <person name="Wallis J.M."/>
            <person name="White S."/>
            <person name="Whitehead S.L."/>
            <person name="Wilkinson J.E."/>
            <person name="Willey D.L."/>
            <person name="Williams H."/>
            <person name="Wilming L."/>
            <person name="Wray P.W."/>
            <person name="Wu Z."/>
            <person name="Coulson A."/>
            <person name="Vaudin M."/>
            <person name="Sulston J.E."/>
            <person name="Durbin R.M."/>
            <person name="Hubbard T."/>
            <person name="Wooster R."/>
            <person name="Dunham I."/>
            <person name="Carter N.P."/>
            <person name="McVean G."/>
            <person name="Ross M.T."/>
            <person name="Harrow J."/>
            <person name="Olson M.V."/>
            <person name="Beck S."/>
            <person name="Rogers J."/>
            <person name="Bentley D.R."/>
        </authorList>
    </citation>
    <scope>NUCLEOTIDE SEQUENCE [LARGE SCALE GENOMIC DNA]</scope>
</reference>
<reference key="3">
    <citation type="journal article" date="2002" name="Oncogene">
        <title>Positional cloning identifies a novel cyclophilin as a candidate amplified oncogene in 1q21.</title>
        <authorList>
            <person name="Meza-Zepeda L.A."/>
            <person name="Forus A."/>
            <person name="Lygren B."/>
            <person name="Dahlberg A.B."/>
            <person name="Godager L.H."/>
            <person name="South A.P."/>
            <person name="Marenholz I."/>
            <person name="Lioumi M."/>
            <person name="Florenes V.A."/>
            <person name="Maelandsmo G.M."/>
            <person name="Serra M."/>
            <person name="Mischke D."/>
            <person name="Nizetic D."/>
            <person name="Ragoussis J."/>
            <person name="Tarkkanen M."/>
            <person name="Nesland J.M."/>
            <person name="Knuutila S."/>
            <person name="Myklebost O."/>
        </authorList>
    </citation>
    <scope>TISSUE SPECIFICITY</scope>
</reference>
<feature type="chain" id="PRO_0000324640" description="Peptidyl-prolyl cis-trans isomerase A-like 4A">
    <location>
        <begin position="1"/>
        <end position="164"/>
    </location>
</feature>
<feature type="domain" description="PPIase cyclophilin-type" evidence="3">
    <location>
        <begin position="7"/>
        <end position="163"/>
    </location>
</feature>
<protein>
    <recommendedName>
        <fullName evidence="7">Peptidyl-prolyl cis-trans isomerase A-like 4A</fullName>
        <shortName>PPIase A-like 4A</shortName>
        <ecNumber>5.2.1.8</ecNumber>
    </recommendedName>
    <alternativeName>
        <fullName evidence="5">Chromosome one-amplified sequence 2</fullName>
        <shortName evidence="5">COAS-2</shortName>
    </alternativeName>
    <alternativeName>
        <fullName evidence="6">Cyclophilin homolog overexpressed in liver cancer</fullName>
    </alternativeName>
</protein>
<name>PAL4A_HUMAN</name>
<organism>
    <name type="scientific">Homo sapiens</name>
    <name type="common">Human</name>
    <dbReference type="NCBI Taxonomy" id="9606"/>
    <lineage>
        <taxon>Eukaryota</taxon>
        <taxon>Metazoa</taxon>
        <taxon>Chordata</taxon>
        <taxon>Craniata</taxon>
        <taxon>Vertebrata</taxon>
        <taxon>Euteleostomi</taxon>
        <taxon>Mammalia</taxon>
        <taxon>Eutheria</taxon>
        <taxon>Euarchontoglires</taxon>
        <taxon>Primates</taxon>
        <taxon>Haplorrhini</taxon>
        <taxon>Catarrhini</taxon>
        <taxon>Hominidae</taxon>
        <taxon>Homo</taxon>
    </lineage>
</organism>
<accession>Q9Y536</accession>
<keyword id="KW-0963">Cytoplasm</keyword>
<keyword id="KW-0413">Isomerase</keyword>
<keyword id="KW-1267">Proteomics identification</keyword>
<keyword id="KW-1185">Reference proteome</keyword>
<keyword id="KW-0697">Rotamase</keyword>
<gene>
    <name evidence="8" type="primary">PPIAL4A</name>
    <name evidence="8" type="synonym">COAS2</name>
    <name evidence="8" type="synonym">PPIAL4B</name>
</gene>
<dbReference type="EC" id="5.2.1.8"/>
<dbReference type="EMBL" id="AB084917">
    <property type="protein sequence ID" value="BAB92073.1"/>
    <property type="molecule type" value="mRNA"/>
</dbReference>
<dbReference type="EMBL" id="AC253572">
    <property type="status" value="NOT_ANNOTATED_CDS"/>
    <property type="molecule type" value="Genomic_DNA"/>
</dbReference>
<dbReference type="EMBL" id="AL022240">
    <property type="protein sequence ID" value="CAB46877.1"/>
    <property type="molecule type" value="Genomic_DNA"/>
</dbReference>
<dbReference type="EMBL" id="AL451058">
    <property type="protein sequence ID" value="CAH71953.1"/>
    <property type="molecule type" value="Genomic_DNA"/>
</dbReference>
<dbReference type="EMBL" id="BX248398">
    <property type="protein sequence ID" value="CAI18814.1"/>
    <property type="molecule type" value="Genomic_DNA"/>
</dbReference>
<dbReference type="CCDS" id="CCDS76197.1"/>
<dbReference type="RefSeq" id="NP_001137355.1">
    <property type="nucleotide sequence ID" value="NM_001143883.4"/>
</dbReference>
<dbReference type="SMR" id="Q9Y536"/>
<dbReference type="BioGRID" id="575836">
    <property type="interactions" value="11"/>
</dbReference>
<dbReference type="FunCoup" id="Q9Y536">
    <property type="interactions" value="222"/>
</dbReference>
<dbReference type="IntAct" id="Q9Y536">
    <property type="interactions" value="6"/>
</dbReference>
<dbReference type="MINT" id="Q9Y536"/>
<dbReference type="STRING" id="9606.ENSP00000485206"/>
<dbReference type="iPTMnet" id="Q9Y536"/>
<dbReference type="PhosphoSitePlus" id="Q9Y536"/>
<dbReference type="SwissPalm" id="Q9Y536"/>
<dbReference type="BioMuta" id="PPIAL4A"/>
<dbReference type="jPOST" id="Q9Y536"/>
<dbReference type="MassIVE" id="Q9Y536"/>
<dbReference type="PaxDb" id="9606-ENSP00000485206"/>
<dbReference type="PeptideAtlas" id="Q9Y536"/>
<dbReference type="ProteomicsDB" id="86284"/>
<dbReference type="Antibodypedia" id="75827">
    <property type="antibodies" value="34 antibodies from 8 providers"/>
</dbReference>
<dbReference type="DNASU" id="164022"/>
<dbReference type="Ensembl" id="ENST00000577856.3">
    <property type="protein sequence ID" value="ENSP00000485206.1"/>
    <property type="gene ID" value="ENSG00000263353.4"/>
</dbReference>
<dbReference type="Ensembl" id="ENST00000709428.1">
    <property type="protein sequence ID" value="ENSP00000517691.1"/>
    <property type="gene ID" value="ENSG00000291978.1"/>
</dbReference>
<dbReference type="GeneID" id="653505"/>
<dbReference type="KEGG" id="hsa:653505"/>
<dbReference type="MANE-Select" id="ENST00000577856.3">
    <property type="protein sequence ID" value="ENSP00000485206.1"/>
    <property type="RefSeq nucleotide sequence ID" value="NM_001143883.4"/>
    <property type="RefSeq protein sequence ID" value="NP_001137355.1"/>
</dbReference>
<dbReference type="UCSC" id="uc031upa.2">
    <property type="organism name" value="human"/>
</dbReference>
<dbReference type="AGR" id="HGNC:24369"/>
<dbReference type="CTD" id="653505"/>
<dbReference type="GeneCards" id="PPIAL4A"/>
<dbReference type="HGNC" id="HGNC:24369">
    <property type="gene designation" value="PPIAL4A"/>
</dbReference>
<dbReference type="HPA" id="ENSG00000263353">
    <property type="expression patterns" value="Not detected"/>
</dbReference>
<dbReference type="MIM" id="608608">
    <property type="type" value="gene"/>
</dbReference>
<dbReference type="neXtProt" id="NX_Q9Y536"/>
<dbReference type="OpenTargets" id="ENSG00000263353"/>
<dbReference type="PharmGKB" id="PA164724917"/>
<dbReference type="VEuPathDB" id="HostDB:ENSG00000263353"/>
<dbReference type="eggNOG" id="KOG0865">
    <property type="taxonomic scope" value="Eukaryota"/>
</dbReference>
<dbReference type="GeneTree" id="ENSGT00950000183087"/>
<dbReference type="InParanoid" id="Q9Y536"/>
<dbReference type="OMA" id="FLELVHC"/>
<dbReference type="OrthoDB" id="9458476at2759"/>
<dbReference type="PAN-GO" id="Q9Y536">
    <property type="GO annotations" value="6 GO annotations based on evolutionary models"/>
</dbReference>
<dbReference type="PhylomeDB" id="Q9Y536"/>
<dbReference type="TreeFam" id="TF316719"/>
<dbReference type="PathwayCommons" id="Q9Y536"/>
<dbReference type="SignaLink" id="Q9Y536"/>
<dbReference type="BioGRID-ORCS" id="653505">
    <property type="hits" value="37 hits in 628 CRISPR screens"/>
</dbReference>
<dbReference type="CD-CODE" id="91857CE7">
    <property type="entry name" value="Nucleolus"/>
</dbReference>
<dbReference type="GenomeRNAi" id="653505"/>
<dbReference type="Pharos" id="Q9Y536">
    <property type="development level" value="Tdark"/>
</dbReference>
<dbReference type="PRO" id="PR:Q9Y536"/>
<dbReference type="Proteomes" id="UP000005640">
    <property type="component" value="Chromosome 1"/>
</dbReference>
<dbReference type="RNAct" id="Q9Y536">
    <property type="molecule type" value="protein"/>
</dbReference>
<dbReference type="Bgee" id="ENSG00000263353">
    <property type="expression patterns" value="Expressed in primordial germ cell in gonad and 33 other cell types or tissues"/>
</dbReference>
<dbReference type="GO" id="GO:0005737">
    <property type="term" value="C:cytoplasm"/>
    <property type="evidence" value="ECO:0000318"/>
    <property type="project" value="GO_Central"/>
</dbReference>
<dbReference type="GO" id="GO:0070062">
    <property type="term" value="C:extracellular exosome"/>
    <property type="evidence" value="ECO:0007005"/>
    <property type="project" value="UniProtKB"/>
</dbReference>
<dbReference type="GO" id="GO:0016018">
    <property type="term" value="F:cyclosporin A binding"/>
    <property type="evidence" value="ECO:0000318"/>
    <property type="project" value="GO_Central"/>
</dbReference>
<dbReference type="GO" id="GO:0003755">
    <property type="term" value="F:peptidyl-prolyl cis-trans isomerase activity"/>
    <property type="evidence" value="ECO:0000318"/>
    <property type="project" value="GO_Central"/>
</dbReference>
<dbReference type="GO" id="GO:0006457">
    <property type="term" value="P:protein folding"/>
    <property type="evidence" value="ECO:0000318"/>
    <property type="project" value="GO_Central"/>
</dbReference>
<dbReference type="FunFam" id="2.40.100.10:FF:000011">
    <property type="entry name" value="Peptidyl-prolyl cis-trans isomerase A"/>
    <property type="match status" value="1"/>
</dbReference>
<dbReference type="Gene3D" id="2.40.100.10">
    <property type="entry name" value="Cyclophilin-like"/>
    <property type="match status" value="1"/>
</dbReference>
<dbReference type="InterPro" id="IPR029000">
    <property type="entry name" value="Cyclophilin-like_dom_sf"/>
</dbReference>
<dbReference type="InterPro" id="IPR024936">
    <property type="entry name" value="Cyclophilin-type_PPIase"/>
</dbReference>
<dbReference type="InterPro" id="IPR020892">
    <property type="entry name" value="Cyclophilin-type_PPIase_CS"/>
</dbReference>
<dbReference type="InterPro" id="IPR002130">
    <property type="entry name" value="Cyclophilin-type_PPIase_dom"/>
</dbReference>
<dbReference type="PANTHER" id="PTHR11071">
    <property type="entry name" value="PEPTIDYL-PROLYL CIS-TRANS ISOMERASE"/>
    <property type="match status" value="1"/>
</dbReference>
<dbReference type="PANTHER" id="PTHR11071:SF450">
    <property type="entry name" value="PEPTIDYL-PROLYL CIS-TRANS ISOMERASE A-LIKE 4A"/>
    <property type="match status" value="1"/>
</dbReference>
<dbReference type="Pfam" id="PF00160">
    <property type="entry name" value="Pro_isomerase"/>
    <property type="match status" value="1"/>
</dbReference>
<dbReference type="PIRSF" id="PIRSF001467">
    <property type="entry name" value="Peptidylpro_ismrse"/>
    <property type="match status" value="1"/>
</dbReference>
<dbReference type="PRINTS" id="PR00153">
    <property type="entry name" value="CSAPPISMRASE"/>
</dbReference>
<dbReference type="SUPFAM" id="SSF50891">
    <property type="entry name" value="Cyclophilin-like"/>
    <property type="match status" value="1"/>
</dbReference>
<dbReference type="PROSITE" id="PS00170">
    <property type="entry name" value="CSA_PPIASE_1"/>
    <property type="match status" value="1"/>
</dbReference>
<dbReference type="PROSITE" id="PS50072">
    <property type="entry name" value="CSA_PPIASE_2"/>
    <property type="match status" value="1"/>
</dbReference>
<evidence type="ECO:0000250" key="1"/>
<evidence type="ECO:0000250" key="2">
    <source>
        <dbReference type="UniProtKB" id="P62937"/>
    </source>
</evidence>
<evidence type="ECO:0000255" key="3">
    <source>
        <dbReference type="PROSITE-ProRule" id="PRU00156"/>
    </source>
</evidence>
<evidence type="ECO:0000269" key="4">
    <source>
    </source>
</evidence>
<evidence type="ECO:0000303" key="5">
    <source>
    </source>
</evidence>
<evidence type="ECO:0000303" key="6">
    <source ref="1"/>
</evidence>
<evidence type="ECO:0000305" key="7"/>
<evidence type="ECO:0000312" key="8">
    <source>
        <dbReference type="HGNC" id="HGNC:24369"/>
    </source>
</evidence>
<sequence>MVNSVVFFDITVDGKPLGRISIKLFADKILKTAENFRALSTGEKGFRYKGSCFHRIIPGFMCQGGDFTRHNGTGDKSIYGEKFDDENLIRKHTGSGILSMANAGPNTNGSQFFICAAKTEWLDGKHVAFGKVKERVNIVEAMEHFGYRNSKTSKKITIADCGQF</sequence>